<dbReference type="EC" id="3.6.4.-" evidence="1"/>
<dbReference type="EMBL" id="CP000806">
    <property type="protein sequence ID" value="ACB49854.1"/>
    <property type="molecule type" value="Genomic_DNA"/>
</dbReference>
<dbReference type="RefSeq" id="WP_009546585.1">
    <property type="nucleotide sequence ID" value="NC_010546.1"/>
</dbReference>
<dbReference type="SMR" id="B1WP72"/>
<dbReference type="STRING" id="43989.cce_0503"/>
<dbReference type="KEGG" id="cyt:cce_0503"/>
<dbReference type="eggNOG" id="COG2255">
    <property type="taxonomic scope" value="Bacteria"/>
</dbReference>
<dbReference type="HOGENOM" id="CLU_055599_1_1_3"/>
<dbReference type="OrthoDB" id="9804478at2"/>
<dbReference type="Proteomes" id="UP000001203">
    <property type="component" value="Chromosome circular"/>
</dbReference>
<dbReference type="GO" id="GO:0005737">
    <property type="term" value="C:cytoplasm"/>
    <property type="evidence" value="ECO:0007669"/>
    <property type="project" value="UniProtKB-SubCell"/>
</dbReference>
<dbReference type="GO" id="GO:0048476">
    <property type="term" value="C:Holliday junction resolvase complex"/>
    <property type="evidence" value="ECO:0007669"/>
    <property type="project" value="UniProtKB-UniRule"/>
</dbReference>
<dbReference type="GO" id="GO:0005524">
    <property type="term" value="F:ATP binding"/>
    <property type="evidence" value="ECO:0007669"/>
    <property type="project" value="UniProtKB-UniRule"/>
</dbReference>
<dbReference type="GO" id="GO:0016887">
    <property type="term" value="F:ATP hydrolysis activity"/>
    <property type="evidence" value="ECO:0007669"/>
    <property type="project" value="InterPro"/>
</dbReference>
<dbReference type="GO" id="GO:0000400">
    <property type="term" value="F:four-way junction DNA binding"/>
    <property type="evidence" value="ECO:0007669"/>
    <property type="project" value="UniProtKB-UniRule"/>
</dbReference>
<dbReference type="GO" id="GO:0009378">
    <property type="term" value="F:four-way junction helicase activity"/>
    <property type="evidence" value="ECO:0007669"/>
    <property type="project" value="InterPro"/>
</dbReference>
<dbReference type="GO" id="GO:0006310">
    <property type="term" value="P:DNA recombination"/>
    <property type="evidence" value="ECO:0007669"/>
    <property type="project" value="UniProtKB-UniRule"/>
</dbReference>
<dbReference type="GO" id="GO:0006281">
    <property type="term" value="P:DNA repair"/>
    <property type="evidence" value="ECO:0007669"/>
    <property type="project" value="UniProtKB-UniRule"/>
</dbReference>
<dbReference type="CDD" id="cd00009">
    <property type="entry name" value="AAA"/>
    <property type="match status" value="1"/>
</dbReference>
<dbReference type="Gene3D" id="1.10.8.60">
    <property type="match status" value="1"/>
</dbReference>
<dbReference type="Gene3D" id="3.40.50.300">
    <property type="entry name" value="P-loop containing nucleotide triphosphate hydrolases"/>
    <property type="match status" value="1"/>
</dbReference>
<dbReference type="Gene3D" id="1.10.10.10">
    <property type="entry name" value="Winged helix-like DNA-binding domain superfamily/Winged helix DNA-binding domain"/>
    <property type="match status" value="1"/>
</dbReference>
<dbReference type="HAMAP" id="MF_00016">
    <property type="entry name" value="DNA_HJ_migration_RuvB"/>
    <property type="match status" value="1"/>
</dbReference>
<dbReference type="InterPro" id="IPR003593">
    <property type="entry name" value="AAA+_ATPase"/>
</dbReference>
<dbReference type="InterPro" id="IPR041445">
    <property type="entry name" value="AAA_lid_4"/>
</dbReference>
<dbReference type="InterPro" id="IPR004605">
    <property type="entry name" value="DNA_helicase_Holl-junc_RuvB"/>
</dbReference>
<dbReference type="InterPro" id="IPR027417">
    <property type="entry name" value="P-loop_NTPase"/>
</dbReference>
<dbReference type="InterPro" id="IPR008824">
    <property type="entry name" value="RuvB-like_N"/>
</dbReference>
<dbReference type="InterPro" id="IPR008823">
    <property type="entry name" value="RuvB_C"/>
</dbReference>
<dbReference type="InterPro" id="IPR036388">
    <property type="entry name" value="WH-like_DNA-bd_sf"/>
</dbReference>
<dbReference type="InterPro" id="IPR036390">
    <property type="entry name" value="WH_DNA-bd_sf"/>
</dbReference>
<dbReference type="NCBIfam" id="NF000868">
    <property type="entry name" value="PRK00080.1"/>
    <property type="match status" value="1"/>
</dbReference>
<dbReference type="NCBIfam" id="TIGR00635">
    <property type="entry name" value="ruvB"/>
    <property type="match status" value="1"/>
</dbReference>
<dbReference type="PANTHER" id="PTHR42848">
    <property type="match status" value="1"/>
</dbReference>
<dbReference type="PANTHER" id="PTHR42848:SF1">
    <property type="entry name" value="HOLLIDAY JUNCTION BRANCH MIGRATION COMPLEX SUBUNIT RUVB"/>
    <property type="match status" value="1"/>
</dbReference>
<dbReference type="Pfam" id="PF17864">
    <property type="entry name" value="AAA_lid_4"/>
    <property type="match status" value="1"/>
</dbReference>
<dbReference type="Pfam" id="PF05491">
    <property type="entry name" value="RuvB_C"/>
    <property type="match status" value="1"/>
</dbReference>
<dbReference type="Pfam" id="PF05496">
    <property type="entry name" value="RuvB_N"/>
    <property type="match status" value="1"/>
</dbReference>
<dbReference type="SMART" id="SM00382">
    <property type="entry name" value="AAA"/>
    <property type="match status" value="1"/>
</dbReference>
<dbReference type="SUPFAM" id="SSF52540">
    <property type="entry name" value="P-loop containing nucleoside triphosphate hydrolases"/>
    <property type="match status" value="1"/>
</dbReference>
<dbReference type="SUPFAM" id="SSF46785">
    <property type="entry name" value="Winged helix' DNA-binding domain"/>
    <property type="match status" value="1"/>
</dbReference>
<organism>
    <name type="scientific">Crocosphaera subtropica (strain ATCC 51142 / BH68)</name>
    <name type="common">Cyanothece sp. (strain ATCC 51142)</name>
    <dbReference type="NCBI Taxonomy" id="43989"/>
    <lineage>
        <taxon>Bacteria</taxon>
        <taxon>Bacillati</taxon>
        <taxon>Cyanobacteriota</taxon>
        <taxon>Cyanophyceae</taxon>
        <taxon>Oscillatoriophycideae</taxon>
        <taxon>Chroococcales</taxon>
        <taxon>Aphanothecaceae</taxon>
        <taxon>Crocosphaera</taxon>
        <taxon>Crocosphaera subtropica</taxon>
    </lineage>
</organism>
<evidence type="ECO:0000255" key="1">
    <source>
        <dbReference type="HAMAP-Rule" id="MF_00016"/>
    </source>
</evidence>
<evidence type="ECO:0000256" key="2">
    <source>
        <dbReference type="SAM" id="MobiDB-lite"/>
    </source>
</evidence>
<reference key="1">
    <citation type="journal article" date="2008" name="Proc. Natl. Acad. Sci. U.S.A.">
        <title>The genome of Cyanothece 51142, a unicellular diazotrophic cyanobacterium important in the marine nitrogen cycle.</title>
        <authorList>
            <person name="Welsh E.A."/>
            <person name="Liberton M."/>
            <person name="Stoeckel J."/>
            <person name="Loh T."/>
            <person name="Elvitigala T."/>
            <person name="Wang C."/>
            <person name="Wollam A."/>
            <person name="Fulton R.S."/>
            <person name="Clifton S.W."/>
            <person name="Jacobs J.M."/>
            <person name="Aurora R."/>
            <person name="Ghosh B.K."/>
            <person name="Sherman L.A."/>
            <person name="Smith R.D."/>
            <person name="Wilson R.K."/>
            <person name="Pakrasi H.B."/>
        </authorList>
    </citation>
    <scope>NUCLEOTIDE SEQUENCE [LARGE SCALE GENOMIC DNA]</scope>
    <source>
        <strain>ATCC 51142 / BH68</strain>
    </source>
</reference>
<protein>
    <recommendedName>
        <fullName evidence="1">Holliday junction branch migration complex subunit RuvB</fullName>
        <ecNumber evidence="1">3.6.4.-</ecNumber>
    </recommendedName>
</protein>
<gene>
    <name evidence="1" type="primary">ruvB</name>
    <name type="ordered locus">cce_0503</name>
</gene>
<proteinExistence type="inferred from homology"/>
<sequence>MAIKRNQGSNPKPEKKERLTKAETHQEQDNLEESIRPHSFDEYIGQKDLKDVLSIVIEAAKTRNEPMDHLLLYGPPGLGKTTISLILASAMGVNCKITAAPALERPRDITGLLVSLKPGDILFIDEIHRLNRLTEELLYPAMEDYRLEITIGKGQAARTRSIPLPKFTLVGATTKVGSLTSPLRDRFGLIQRLKFYEPEELALIIKRTAKLLNTSITEQGAAEIGRRSRGTPRIANRLLRRVRDYIQVKKFDSITQELAAEALDIYQVDPQGLDWTDRLILDTMITQFNGGPVGLEAVAAATGEDAKTIEEVYEPYLLQIGYLNRTPRGRVVTTVAYQHLGKTGEEQLSIFSEQ</sequence>
<name>RUVB_CROS5</name>
<accession>B1WP72</accession>
<feature type="chain" id="PRO_1000089638" description="Holliday junction branch migration complex subunit RuvB">
    <location>
        <begin position="1"/>
        <end position="354"/>
    </location>
</feature>
<feature type="region of interest" description="Disordered" evidence="2">
    <location>
        <begin position="1"/>
        <end position="36"/>
    </location>
</feature>
<feature type="region of interest" description="Large ATPase domain (RuvB-L)" evidence="1">
    <location>
        <begin position="13"/>
        <end position="196"/>
    </location>
</feature>
<feature type="region of interest" description="Small ATPAse domain (RuvB-S)" evidence="1">
    <location>
        <begin position="197"/>
        <end position="267"/>
    </location>
</feature>
<feature type="region of interest" description="Head domain (RuvB-H)" evidence="1">
    <location>
        <begin position="270"/>
        <end position="354"/>
    </location>
</feature>
<feature type="compositionally biased region" description="Polar residues" evidence="2">
    <location>
        <begin position="1"/>
        <end position="10"/>
    </location>
</feature>
<feature type="compositionally biased region" description="Basic and acidic residues" evidence="2">
    <location>
        <begin position="12"/>
        <end position="36"/>
    </location>
</feature>
<feature type="binding site" evidence="1">
    <location>
        <position position="35"/>
    </location>
    <ligand>
        <name>ATP</name>
        <dbReference type="ChEBI" id="CHEBI:30616"/>
    </ligand>
</feature>
<feature type="binding site" evidence="1">
    <location>
        <position position="36"/>
    </location>
    <ligand>
        <name>ATP</name>
        <dbReference type="ChEBI" id="CHEBI:30616"/>
    </ligand>
</feature>
<feature type="binding site" evidence="1">
    <location>
        <position position="77"/>
    </location>
    <ligand>
        <name>ATP</name>
        <dbReference type="ChEBI" id="CHEBI:30616"/>
    </ligand>
</feature>
<feature type="binding site" evidence="1">
    <location>
        <position position="80"/>
    </location>
    <ligand>
        <name>ATP</name>
        <dbReference type="ChEBI" id="CHEBI:30616"/>
    </ligand>
</feature>
<feature type="binding site" evidence="1">
    <location>
        <position position="81"/>
    </location>
    <ligand>
        <name>ATP</name>
        <dbReference type="ChEBI" id="CHEBI:30616"/>
    </ligand>
</feature>
<feature type="binding site" evidence="1">
    <location>
        <position position="81"/>
    </location>
    <ligand>
        <name>Mg(2+)</name>
        <dbReference type="ChEBI" id="CHEBI:18420"/>
    </ligand>
</feature>
<feature type="binding site" evidence="1">
    <location>
        <position position="82"/>
    </location>
    <ligand>
        <name>ATP</name>
        <dbReference type="ChEBI" id="CHEBI:30616"/>
    </ligand>
</feature>
<feature type="binding site" evidence="1">
    <location>
        <begin position="143"/>
        <end position="145"/>
    </location>
    <ligand>
        <name>ATP</name>
        <dbReference type="ChEBI" id="CHEBI:30616"/>
    </ligand>
</feature>
<feature type="binding site" evidence="1">
    <location>
        <position position="186"/>
    </location>
    <ligand>
        <name>ATP</name>
        <dbReference type="ChEBI" id="CHEBI:30616"/>
    </ligand>
</feature>
<feature type="binding site" evidence="1">
    <location>
        <position position="196"/>
    </location>
    <ligand>
        <name>ATP</name>
        <dbReference type="ChEBI" id="CHEBI:30616"/>
    </ligand>
</feature>
<feature type="binding site" evidence="1">
    <location>
        <position position="233"/>
    </location>
    <ligand>
        <name>ATP</name>
        <dbReference type="ChEBI" id="CHEBI:30616"/>
    </ligand>
</feature>
<feature type="binding site" evidence="1">
    <location>
        <position position="325"/>
    </location>
    <ligand>
        <name>DNA</name>
        <dbReference type="ChEBI" id="CHEBI:16991"/>
    </ligand>
</feature>
<feature type="binding site" evidence="1">
    <location>
        <position position="330"/>
    </location>
    <ligand>
        <name>DNA</name>
        <dbReference type="ChEBI" id="CHEBI:16991"/>
    </ligand>
</feature>
<comment type="function">
    <text evidence="1">The RuvA-RuvB-RuvC complex processes Holliday junction (HJ) DNA during genetic recombination and DNA repair, while the RuvA-RuvB complex plays an important role in the rescue of blocked DNA replication forks via replication fork reversal (RFR). RuvA specifically binds to HJ cruciform DNA, conferring on it an open structure. The RuvB hexamer acts as an ATP-dependent pump, pulling dsDNA into and through the RuvAB complex. RuvB forms 2 homohexamers on either side of HJ DNA bound by 1 or 2 RuvA tetramers; 4 subunits per hexamer contact DNA at a time. Coordinated motions by a converter formed by DNA-disengaged RuvB subunits stimulates ATP hydrolysis and nucleotide exchange. Immobilization of the converter enables RuvB to convert the ATP-contained energy into a lever motion, pulling 2 nucleotides of DNA out of the RuvA tetramer per ATP hydrolyzed, thus driving DNA branch migration. The RuvB motors rotate together with the DNA substrate, which together with the progressing nucleotide cycle form the mechanistic basis for DNA recombination by continuous HJ branch migration. Branch migration allows RuvC to scan DNA until it finds its consensus sequence, where it cleaves and resolves cruciform DNA.</text>
</comment>
<comment type="catalytic activity">
    <reaction evidence="1">
        <text>ATP + H2O = ADP + phosphate + H(+)</text>
        <dbReference type="Rhea" id="RHEA:13065"/>
        <dbReference type="ChEBI" id="CHEBI:15377"/>
        <dbReference type="ChEBI" id="CHEBI:15378"/>
        <dbReference type="ChEBI" id="CHEBI:30616"/>
        <dbReference type="ChEBI" id="CHEBI:43474"/>
        <dbReference type="ChEBI" id="CHEBI:456216"/>
    </reaction>
</comment>
<comment type="subunit">
    <text evidence="1">Homohexamer. Forms an RuvA(8)-RuvB(12)-Holliday junction (HJ) complex. HJ DNA is sandwiched between 2 RuvA tetramers; dsDNA enters through RuvA and exits via RuvB. An RuvB hexamer assembles on each DNA strand where it exits the tetramer. Each RuvB hexamer is contacted by two RuvA subunits (via domain III) on 2 adjacent RuvB subunits; this complex drives branch migration. In the full resolvosome a probable DNA-RuvA(4)-RuvB(12)-RuvC(2) complex forms which resolves the HJ.</text>
</comment>
<comment type="subcellular location">
    <subcellularLocation>
        <location evidence="1">Cytoplasm</location>
    </subcellularLocation>
</comment>
<comment type="domain">
    <text evidence="1">Has 3 domains, the large (RuvB-L) and small ATPase (RuvB-S) domains and the C-terminal head (RuvB-H) domain. The head domain binds DNA, while the ATPase domains jointly bind ATP, ADP or are empty depending on the state of the subunit in the translocation cycle. During a single DNA translocation step the structure of each domain remains the same, but their relative positions change.</text>
</comment>
<comment type="similarity">
    <text evidence="1">Belongs to the RuvB family.</text>
</comment>
<keyword id="KW-0067">ATP-binding</keyword>
<keyword id="KW-0963">Cytoplasm</keyword>
<keyword id="KW-0227">DNA damage</keyword>
<keyword id="KW-0233">DNA recombination</keyword>
<keyword id="KW-0234">DNA repair</keyword>
<keyword id="KW-0238">DNA-binding</keyword>
<keyword id="KW-0378">Hydrolase</keyword>
<keyword id="KW-0547">Nucleotide-binding</keyword>
<keyword id="KW-1185">Reference proteome</keyword>